<feature type="chain" id="PRO_0000190521" description="4-hydroxy-3-methylbut-2-en-1-yl diphosphate synthase (flavodoxin)">
    <location>
        <begin position="1"/>
        <end position="371"/>
    </location>
</feature>
<feature type="binding site" evidence="1">
    <location>
        <position position="269"/>
    </location>
    <ligand>
        <name>[4Fe-4S] cluster</name>
        <dbReference type="ChEBI" id="CHEBI:49883"/>
    </ligand>
</feature>
<feature type="binding site" evidence="1">
    <location>
        <position position="272"/>
    </location>
    <ligand>
        <name>[4Fe-4S] cluster</name>
        <dbReference type="ChEBI" id="CHEBI:49883"/>
    </ligand>
</feature>
<feature type="binding site" evidence="1">
    <location>
        <position position="304"/>
    </location>
    <ligand>
        <name>[4Fe-4S] cluster</name>
        <dbReference type="ChEBI" id="CHEBI:49883"/>
    </ligand>
</feature>
<feature type="binding site" evidence="1">
    <location>
        <position position="311"/>
    </location>
    <ligand>
        <name>[4Fe-4S] cluster</name>
        <dbReference type="ChEBI" id="CHEBI:49883"/>
    </ligand>
</feature>
<keyword id="KW-0004">4Fe-4S</keyword>
<keyword id="KW-0408">Iron</keyword>
<keyword id="KW-0411">Iron-sulfur</keyword>
<keyword id="KW-0414">Isoprene biosynthesis</keyword>
<keyword id="KW-0479">Metal-binding</keyword>
<keyword id="KW-0560">Oxidoreductase</keyword>
<evidence type="ECO:0000255" key="1">
    <source>
        <dbReference type="HAMAP-Rule" id="MF_00159"/>
    </source>
</evidence>
<dbReference type="EC" id="1.17.7.3" evidence="1"/>
<dbReference type="EMBL" id="CR543861">
    <property type="protein sequence ID" value="CAG67485.1"/>
    <property type="molecule type" value="Genomic_DNA"/>
</dbReference>
<dbReference type="RefSeq" id="WP_004919993.1">
    <property type="nucleotide sequence ID" value="NC_005966.1"/>
</dbReference>
<dbReference type="SMR" id="Q6FEM3"/>
<dbReference type="STRING" id="202950.GCA_001485005_00797"/>
<dbReference type="GeneID" id="45233038"/>
<dbReference type="KEGG" id="aci:ACIAD0561"/>
<dbReference type="eggNOG" id="COG0821">
    <property type="taxonomic scope" value="Bacteria"/>
</dbReference>
<dbReference type="HOGENOM" id="CLU_042258_0_0_6"/>
<dbReference type="OrthoDB" id="9803214at2"/>
<dbReference type="BioCyc" id="ASP62977:ACIAD_RS02550-MONOMER"/>
<dbReference type="UniPathway" id="UPA00056">
    <property type="reaction ID" value="UER00096"/>
</dbReference>
<dbReference type="Proteomes" id="UP000000430">
    <property type="component" value="Chromosome"/>
</dbReference>
<dbReference type="GO" id="GO:0051539">
    <property type="term" value="F:4 iron, 4 sulfur cluster binding"/>
    <property type="evidence" value="ECO:0007669"/>
    <property type="project" value="UniProtKB-UniRule"/>
</dbReference>
<dbReference type="GO" id="GO:0046429">
    <property type="term" value="F:4-hydroxy-3-methylbut-2-en-1-yl diphosphate synthase activity (ferredoxin)"/>
    <property type="evidence" value="ECO:0007669"/>
    <property type="project" value="UniProtKB-UniRule"/>
</dbReference>
<dbReference type="GO" id="GO:0141197">
    <property type="term" value="F:4-hydroxy-3-methylbut-2-enyl-diphosphate synthase activity (flavodoxin)"/>
    <property type="evidence" value="ECO:0007669"/>
    <property type="project" value="UniProtKB-EC"/>
</dbReference>
<dbReference type="GO" id="GO:0005506">
    <property type="term" value="F:iron ion binding"/>
    <property type="evidence" value="ECO:0007669"/>
    <property type="project" value="InterPro"/>
</dbReference>
<dbReference type="GO" id="GO:0019288">
    <property type="term" value="P:isopentenyl diphosphate biosynthetic process, methylerythritol 4-phosphate pathway"/>
    <property type="evidence" value="ECO:0007669"/>
    <property type="project" value="UniProtKB-UniRule"/>
</dbReference>
<dbReference type="GO" id="GO:0016114">
    <property type="term" value="P:terpenoid biosynthetic process"/>
    <property type="evidence" value="ECO:0007669"/>
    <property type="project" value="InterPro"/>
</dbReference>
<dbReference type="FunFam" id="3.20.20.20:FF:000001">
    <property type="entry name" value="4-hydroxy-3-methylbut-2-en-1-yl diphosphate synthase (flavodoxin)"/>
    <property type="match status" value="1"/>
</dbReference>
<dbReference type="Gene3D" id="3.20.20.20">
    <property type="entry name" value="Dihydropteroate synthase-like"/>
    <property type="match status" value="1"/>
</dbReference>
<dbReference type="Gene3D" id="3.30.413.10">
    <property type="entry name" value="Sulfite Reductase Hemoprotein, domain 1"/>
    <property type="match status" value="1"/>
</dbReference>
<dbReference type="HAMAP" id="MF_00159">
    <property type="entry name" value="IspG"/>
    <property type="match status" value="1"/>
</dbReference>
<dbReference type="InterPro" id="IPR011005">
    <property type="entry name" value="Dihydropteroate_synth-like_sf"/>
</dbReference>
<dbReference type="InterPro" id="IPR036849">
    <property type="entry name" value="Enolase-like_C_sf"/>
</dbReference>
<dbReference type="InterPro" id="IPR016425">
    <property type="entry name" value="IspG_bac"/>
</dbReference>
<dbReference type="InterPro" id="IPR004588">
    <property type="entry name" value="IspG_bac-typ"/>
</dbReference>
<dbReference type="InterPro" id="IPR045854">
    <property type="entry name" value="NO2/SO3_Rdtase_4Fe4S_sf"/>
</dbReference>
<dbReference type="NCBIfam" id="TIGR00612">
    <property type="entry name" value="ispG_gcpE"/>
    <property type="match status" value="1"/>
</dbReference>
<dbReference type="NCBIfam" id="NF001540">
    <property type="entry name" value="PRK00366.1"/>
    <property type="match status" value="1"/>
</dbReference>
<dbReference type="PANTHER" id="PTHR30454">
    <property type="entry name" value="4-HYDROXY-3-METHYLBUT-2-EN-1-YL DIPHOSPHATE SYNTHASE"/>
    <property type="match status" value="1"/>
</dbReference>
<dbReference type="PANTHER" id="PTHR30454:SF0">
    <property type="entry name" value="4-HYDROXY-3-METHYLBUT-2-EN-1-YL DIPHOSPHATE SYNTHASE (FERREDOXIN), CHLOROPLASTIC"/>
    <property type="match status" value="1"/>
</dbReference>
<dbReference type="Pfam" id="PF04551">
    <property type="entry name" value="GcpE"/>
    <property type="match status" value="1"/>
</dbReference>
<dbReference type="PIRSF" id="PIRSF004640">
    <property type="entry name" value="IspG"/>
    <property type="match status" value="1"/>
</dbReference>
<dbReference type="SUPFAM" id="SSF51604">
    <property type="entry name" value="Enolase C-terminal domain-like"/>
    <property type="match status" value="1"/>
</dbReference>
<dbReference type="SUPFAM" id="SSF56014">
    <property type="entry name" value="Nitrite and sulphite reductase 4Fe-4S domain-like"/>
    <property type="match status" value="1"/>
</dbReference>
<sequence>MIENPIKRRPTRKIRVGSVYVGGDAPISIQSMTNTETCDVDATVAQIQRCADAGVDIMRVSVPSMEAAEAFGKIRQRVSVPLVADIHFDHRIALAVADYGADCLRINPGNIGSDQKVREVVAAARHHGISIRIGVNAGSLEKDLQKKYGEPTGAALLESAMRHIDILDRLDFHEFKVSVKASNVFLTMDAYRLLSQQIDNPLHLGVTEAGIYRTGTVKSAIALGGLLMEGIGDTMRISLAAEPEDEVKIGFDILKSLGLRSNGINFIACPSCSRQEFNVIKVMQALEERLEDIRTPMDLSVIGCKVNGPGEAKEADIGIVGASPRSLVYRNGEKSHLIDTDQLVDEIEDMVRQRVKEIEEAKSKEIIRSSS</sequence>
<name>ISPG_ACIAD</name>
<gene>
    <name evidence="1" type="primary">ispG</name>
    <name type="ordered locus">ACIAD0561</name>
</gene>
<comment type="function">
    <text evidence="1">Converts 2C-methyl-D-erythritol 2,4-cyclodiphosphate (ME-2,4cPP) into 1-hydroxy-2-methyl-2-(E)-butenyl 4-diphosphate.</text>
</comment>
<comment type="catalytic activity">
    <reaction evidence="1">
        <text>(2E)-4-hydroxy-3-methylbut-2-enyl diphosphate + oxidized [flavodoxin] + H2O + 2 H(+) = 2-C-methyl-D-erythritol 2,4-cyclic diphosphate + reduced [flavodoxin]</text>
        <dbReference type="Rhea" id="RHEA:43604"/>
        <dbReference type="Rhea" id="RHEA-COMP:10622"/>
        <dbReference type="Rhea" id="RHEA-COMP:10623"/>
        <dbReference type="ChEBI" id="CHEBI:15377"/>
        <dbReference type="ChEBI" id="CHEBI:15378"/>
        <dbReference type="ChEBI" id="CHEBI:57618"/>
        <dbReference type="ChEBI" id="CHEBI:58210"/>
        <dbReference type="ChEBI" id="CHEBI:58483"/>
        <dbReference type="ChEBI" id="CHEBI:128753"/>
        <dbReference type="EC" id="1.17.7.3"/>
    </reaction>
</comment>
<comment type="cofactor">
    <cofactor evidence="1">
        <name>[4Fe-4S] cluster</name>
        <dbReference type="ChEBI" id="CHEBI:49883"/>
    </cofactor>
    <text evidence="1">Binds 1 [4Fe-4S] cluster.</text>
</comment>
<comment type="pathway">
    <text evidence="1">Isoprenoid biosynthesis; isopentenyl diphosphate biosynthesis via DXP pathway; isopentenyl diphosphate from 1-deoxy-D-xylulose 5-phosphate: step 5/6.</text>
</comment>
<comment type="similarity">
    <text evidence="1">Belongs to the IspG family.</text>
</comment>
<protein>
    <recommendedName>
        <fullName evidence="1">4-hydroxy-3-methylbut-2-en-1-yl diphosphate synthase (flavodoxin)</fullName>
        <ecNumber evidence="1">1.17.7.3</ecNumber>
    </recommendedName>
    <alternativeName>
        <fullName evidence="1">1-hydroxy-2-methyl-2-(E)-butenyl 4-diphosphate synthase</fullName>
    </alternativeName>
</protein>
<accession>Q6FEM3</accession>
<reference key="1">
    <citation type="journal article" date="2004" name="Nucleic Acids Res.">
        <title>Unique features revealed by the genome sequence of Acinetobacter sp. ADP1, a versatile and naturally transformation competent bacterium.</title>
        <authorList>
            <person name="Barbe V."/>
            <person name="Vallenet D."/>
            <person name="Fonknechten N."/>
            <person name="Kreimeyer A."/>
            <person name="Oztas S."/>
            <person name="Labarre L."/>
            <person name="Cruveiller S."/>
            <person name="Robert C."/>
            <person name="Duprat S."/>
            <person name="Wincker P."/>
            <person name="Ornston L.N."/>
            <person name="Weissenbach J."/>
            <person name="Marliere P."/>
            <person name="Cohen G.N."/>
            <person name="Medigue C."/>
        </authorList>
    </citation>
    <scope>NUCLEOTIDE SEQUENCE [LARGE SCALE GENOMIC DNA]</scope>
    <source>
        <strain>ATCC 33305 / BD413 / ADP1</strain>
    </source>
</reference>
<proteinExistence type="inferred from homology"/>
<organism>
    <name type="scientific">Acinetobacter baylyi (strain ATCC 33305 / BD413 / ADP1)</name>
    <dbReference type="NCBI Taxonomy" id="62977"/>
    <lineage>
        <taxon>Bacteria</taxon>
        <taxon>Pseudomonadati</taxon>
        <taxon>Pseudomonadota</taxon>
        <taxon>Gammaproteobacteria</taxon>
        <taxon>Moraxellales</taxon>
        <taxon>Moraxellaceae</taxon>
        <taxon>Acinetobacter</taxon>
    </lineage>
</organism>